<sequence>MLDLEVVPERSLGNEQWEFTLGMPLAQAVAILQKHCRIIKNVQVLYSEQSPLSHDLILNLTQDGIKLLFDAFNQRLKVIEVYDLTKVKLKYCGVHFNSQAIAPTIEQIDQSFGATHPGVYNSAEQLFHLNFRGLSFSFQLDSWTEAPKYEPNFAHGLASLQIPHGATVKRMYIYSGNSLQDTKAPMMPLSCFLGNVYAESVDVIRDGTGPSGLRLRLLAAGCGPGVLADAKMRVFERAVYFGDSCQDVLSMLGSPHKVFYKSEDKMKIHSPSPHKQVPSKCNDYFFNYFTLGVDILFDANTHKVKKFVLHTNYPGHYNFNIYHRCEFKIPLAIKKENAGGQTEICTTYSKWDSIQELLGHPVEKPVVLHRSSSPNNTNPFGSTFCFGLQRMIFEVMQNNHIASVTLYGPPRPGAHLRTAELP</sequence>
<feature type="chain" id="PRO_0000221085" description="Phagosome assembly factor 1">
    <location>
        <begin position="1"/>
        <end position="422"/>
    </location>
</feature>
<reference key="1">
    <citation type="journal article" date="1998" name="Biochem. Biophys. Res. Commun.">
        <title>Molecular cloning and characterization of rat lin-10.</title>
        <authorList>
            <person name="Ide N."/>
            <person name="Hirao K."/>
            <person name="Hata Y."/>
            <person name="Takeuchi M."/>
            <person name="Irie M."/>
            <person name="Yao I."/>
            <person name="Deguchi M."/>
            <person name="Toyoda A."/>
            <person name="Nishioka H."/>
            <person name="Mizoguchi A."/>
            <person name="Takai Y."/>
        </authorList>
    </citation>
    <scope>NUCLEOTIDE SEQUENCE [MRNA]</scope>
    <source>
        <strain>Sprague-Dawley</strain>
    </source>
</reference>
<organism>
    <name type="scientific">Rattus norvegicus</name>
    <name type="common">Rat</name>
    <dbReference type="NCBI Taxonomy" id="10116"/>
    <lineage>
        <taxon>Eukaryota</taxon>
        <taxon>Metazoa</taxon>
        <taxon>Chordata</taxon>
        <taxon>Craniata</taxon>
        <taxon>Vertebrata</taxon>
        <taxon>Euteleostomi</taxon>
        <taxon>Mammalia</taxon>
        <taxon>Eutheria</taxon>
        <taxon>Euarchontoglires</taxon>
        <taxon>Glires</taxon>
        <taxon>Rodentia</taxon>
        <taxon>Myomorpha</taxon>
        <taxon>Muroidea</taxon>
        <taxon>Muridae</taxon>
        <taxon>Murinae</taxon>
        <taxon>Rattus</taxon>
    </lineage>
</organism>
<protein>
    <recommendedName>
        <fullName>Phagosome assembly factor 1</fullName>
    </recommendedName>
</protein>
<evidence type="ECO:0000250" key="1">
    <source>
        <dbReference type="UniProtKB" id="Q9BSU1"/>
    </source>
</evidence>
<evidence type="ECO:0000305" key="2"/>
<evidence type="ECO:0000305" key="3">
    <source>
    </source>
</evidence>
<dbReference type="EMBL" id="U92010">
    <property type="protein sequence ID" value="AAB51383.1"/>
    <property type="molecule type" value="mRNA"/>
</dbReference>
<dbReference type="PIR" id="JE0239">
    <property type="entry name" value="JE0239"/>
</dbReference>
<dbReference type="RefSeq" id="NP_620609.1">
    <property type="nucleotide sequence ID" value="NM_139040.1"/>
</dbReference>
<dbReference type="FunCoup" id="O08654">
    <property type="interactions" value="1710"/>
</dbReference>
<dbReference type="STRING" id="10116.ENSRNOP00000020003"/>
<dbReference type="iPTMnet" id="O08654"/>
<dbReference type="PhosphoSitePlus" id="O08654"/>
<dbReference type="PaxDb" id="10116-ENSRNOP00000020003"/>
<dbReference type="GeneID" id="207123"/>
<dbReference type="KEGG" id="rno:207123"/>
<dbReference type="UCSC" id="RGD:621098">
    <property type="organism name" value="rat"/>
</dbReference>
<dbReference type="AGR" id="RGD:621098"/>
<dbReference type="CTD" id="80262"/>
<dbReference type="RGD" id="621098">
    <property type="gene designation" value="Phaf1"/>
</dbReference>
<dbReference type="eggNOG" id="KOG2819">
    <property type="taxonomic scope" value="Eukaryota"/>
</dbReference>
<dbReference type="InParanoid" id="O08654"/>
<dbReference type="PhylomeDB" id="O08654"/>
<dbReference type="PRO" id="PR:O08654"/>
<dbReference type="Proteomes" id="UP000002494">
    <property type="component" value="Unplaced"/>
</dbReference>
<dbReference type="GO" id="GO:0030425">
    <property type="term" value="C:dendrite"/>
    <property type="evidence" value="ECO:0000314"/>
    <property type="project" value="RGD"/>
</dbReference>
<dbReference type="GO" id="GO:0000407">
    <property type="term" value="C:phagophore assembly site"/>
    <property type="evidence" value="ECO:0000250"/>
    <property type="project" value="UniProtKB"/>
</dbReference>
<dbReference type="GO" id="GO:0030672">
    <property type="term" value="C:synaptic vesicle membrane"/>
    <property type="evidence" value="ECO:0000314"/>
    <property type="project" value="RGD"/>
</dbReference>
<dbReference type="GO" id="GO:0005802">
    <property type="term" value="C:trans-Golgi network"/>
    <property type="evidence" value="ECO:0000314"/>
    <property type="project" value="RGD"/>
</dbReference>
<dbReference type="GO" id="GO:0035254">
    <property type="term" value="F:glutamate receptor binding"/>
    <property type="evidence" value="ECO:0000314"/>
    <property type="project" value="RGD"/>
</dbReference>
<dbReference type="GO" id="GO:0030165">
    <property type="term" value="F:PDZ domain binding"/>
    <property type="evidence" value="ECO:0000353"/>
    <property type="project" value="RGD"/>
</dbReference>
<dbReference type="GO" id="GO:0043001">
    <property type="term" value="P:Golgi to plasma membrane protein transport"/>
    <property type="evidence" value="ECO:0000315"/>
    <property type="project" value="RGD"/>
</dbReference>
<dbReference type="InterPro" id="IPR005373">
    <property type="entry name" value="PHAF1"/>
</dbReference>
<dbReference type="InterPro" id="IPR039156">
    <property type="entry name" value="PHAF1/BROMI"/>
</dbReference>
<dbReference type="PANTHER" id="PTHR13465:SF2">
    <property type="entry name" value="PHAGOSOME ASSEMBLY FACTOR 1"/>
    <property type="match status" value="1"/>
</dbReference>
<dbReference type="PANTHER" id="PTHR13465">
    <property type="entry name" value="UPF0183 PROTEIN"/>
    <property type="match status" value="1"/>
</dbReference>
<dbReference type="Pfam" id="PF03676">
    <property type="entry name" value="PHAF1"/>
    <property type="match status" value="1"/>
</dbReference>
<accession>O08654</accession>
<name>PHAF1_RAT</name>
<gene>
    <name type="primary">Phaf1</name>
</gene>
<proteinExistence type="evidence at transcript level"/>
<comment type="function">
    <text evidence="1">Plays a regulatory role in autophagic activity. In complex with BCAS3, associates with the autophagosome formation site during both non-selective and selective autophagy.</text>
</comment>
<comment type="subunit">
    <text evidence="1">Interacts with BCAS3; the interaction is requrired for the association with the phagophore.</text>
</comment>
<comment type="subcellular location">
    <subcellularLocation>
        <location evidence="1">Cytoplasm</location>
    </subcellularLocation>
    <subcellularLocation>
        <location evidence="1">Preautophagosomal structure</location>
    </subcellularLocation>
    <text evidence="1">The BCAS3:PHAF1 complex is recruited to the preautophagosomal structures adjacent to the damaged mitochondria upon mitophagy in a PRKN-PINK1 dependent manner.</text>
</comment>
<comment type="similarity">
    <text evidence="2">Belongs to the PHAF1 family.</text>
</comment>
<comment type="caution">
    <text evidence="3">Was originally thought to be a lin-10 homolog.</text>
</comment>
<keyword id="KW-0963">Cytoplasm</keyword>
<keyword id="KW-1185">Reference proteome</keyword>